<comment type="function">
    <text evidence="1">May play a key role in the regulation of the intracellular concentration of adenosylhomocysteine.</text>
</comment>
<comment type="catalytic activity">
    <reaction evidence="1">
        <text>S-adenosyl-L-homocysteine + H2O = L-homocysteine + adenosine</text>
        <dbReference type="Rhea" id="RHEA:21708"/>
        <dbReference type="ChEBI" id="CHEBI:15377"/>
        <dbReference type="ChEBI" id="CHEBI:16335"/>
        <dbReference type="ChEBI" id="CHEBI:57856"/>
        <dbReference type="ChEBI" id="CHEBI:58199"/>
        <dbReference type="EC" id="3.13.2.1"/>
    </reaction>
</comment>
<comment type="cofactor">
    <cofactor evidence="1">
        <name>NAD(+)</name>
        <dbReference type="ChEBI" id="CHEBI:57540"/>
    </cofactor>
    <text evidence="1">Binds 1 NAD(+) per subunit.</text>
</comment>
<comment type="pathway">
    <text evidence="1">Amino-acid biosynthesis; L-homocysteine biosynthesis; L-homocysteine from S-adenosyl-L-homocysteine: step 1/1.</text>
</comment>
<comment type="subcellular location">
    <subcellularLocation>
        <location evidence="1">Cytoplasm</location>
    </subcellularLocation>
</comment>
<comment type="similarity">
    <text evidence="1">Belongs to the adenosylhomocysteinase family.</text>
</comment>
<organism>
    <name type="scientific">Leptospira interrogans serogroup Icterohaemorrhagiae serovar Lai (strain 56601)</name>
    <dbReference type="NCBI Taxonomy" id="189518"/>
    <lineage>
        <taxon>Bacteria</taxon>
        <taxon>Pseudomonadati</taxon>
        <taxon>Spirochaetota</taxon>
        <taxon>Spirochaetia</taxon>
        <taxon>Leptospirales</taxon>
        <taxon>Leptospiraceae</taxon>
        <taxon>Leptospira</taxon>
    </lineage>
</organism>
<reference key="1">
    <citation type="journal article" date="2003" name="Nature">
        <title>Unique physiological and pathogenic features of Leptospira interrogans revealed by whole-genome sequencing.</title>
        <authorList>
            <person name="Ren S.-X."/>
            <person name="Fu G."/>
            <person name="Jiang X.-G."/>
            <person name="Zeng R."/>
            <person name="Miao Y.-G."/>
            <person name="Xu H."/>
            <person name="Zhang Y.-X."/>
            <person name="Xiong H."/>
            <person name="Lu G."/>
            <person name="Lu L.-F."/>
            <person name="Jiang H.-Q."/>
            <person name="Jia J."/>
            <person name="Tu Y.-F."/>
            <person name="Jiang J.-X."/>
            <person name="Gu W.-Y."/>
            <person name="Zhang Y.-Q."/>
            <person name="Cai Z."/>
            <person name="Sheng H.-H."/>
            <person name="Yin H.-F."/>
            <person name="Zhang Y."/>
            <person name="Zhu G.-F."/>
            <person name="Wan M."/>
            <person name="Huang H.-L."/>
            <person name="Qian Z."/>
            <person name="Wang S.-Y."/>
            <person name="Ma W."/>
            <person name="Yao Z.-J."/>
            <person name="Shen Y."/>
            <person name="Qiang B.-Q."/>
            <person name="Xia Q.-C."/>
            <person name="Guo X.-K."/>
            <person name="Danchin A."/>
            <person name="Saint Girons I."/>
            <person name="Somerville R.L."/>
            <person name="Wen Y.-M."/>
            <person name="Shi M.-H."/>
            <person name="Chen Z."/>
            <person name="Xu J.-G."/>
            <person name="Zhao G.-P."/>
        </authorList>
    </citation>
    <scope>NUCLEOTIDE SEQUENCE [LARGE SCALE GENOMIC DNA]</scope>
    <source>
        <strain>56601</strain>
    </source>
</reference>
<feature type="chain" id="PRO_0000116966" description="Adenosylhomocysteinase">
    <location>
        <begin position="1"/>
        <end position="436"/>
    </location>
</feature>
<feature type="binding site" evidence="1">
    <location>
        <position position="62"/>
    </location>
    <ligand>
        <name>substrate</name>
    </ligand>
</feature>
<feature type="binding site" evidence="1">
    <location>
        <position position="136"/>
    </location>
    <ligand>
        <name>substrate</name>
    </ligand>
</feature>
<feature type="binding site" evidence="1">
    <location>
        <position position="161"/>
    </location>
    <ligand>
        <name>substrate</name>
    </ligand>
</feature>
<feature type="binding site" evidence="1">
    <location>
        <begin position="162"/>
        <end position="164"/>
    </location>
    <ligand>
        <name>NAD(+)</name>
        <dbReference type="ChEBI" id="CHEBI:57540"/>
    </ligand>
</feature>
<feature type="binding site" evidence="1">
    <location>
        <position position="191"/>
    </location>
    <ligand>
        <name>substrate</name>
    </ligand>
</feature>
<feature type="binding site" evidence="1">
    <location>
        <position position="195"/>
    </location>
    <ligand>
        <name>substrate</name>
    </ligand>
</feature>
<feature type="binding site" evidence="1">
    <location>
        <position position="196"/>
    </location>
    <ligand>
        <name>NAD(+)</name>
        <dbReference type="ChEBI" id="CHEBI:57540"/>
    </ligand>
</feature>
<feature type="binding site" evidence="1">
    <location>
        <begin position="225"/>
        <end position="230"/>
    </location>
    <ligand>
        <name>NAD(+)</name>
        <dbReference type="ChEBI" id="CHEBI:57540"/>
    </ligand>
</feature>
<feature type="binding site" evidence="1">
    <location>
        <position position="248"/>
    </location>
    <ligand>
        <name>NAD(+)</name>
        <dbReference type="ChEBI" id="CHEBI:57540"/>
    </ligand>
</feature>
<feature type="binding site" evidence="1">
    <location>
        <position position="283"/>
    </location>
    <ligand>
        <name>NAD(+)</name>
        <dbReference type="ChEBI" id="CHEBI:57540"/>
    </ligand>
</feature>
<feature type="binding site" evidence="1">
    <location>
        <begin position="304"/>
        <end position="306"/>
    </location>
    <ligand>
        <name>NAD(+)</name>
        <dbReference type="ChEBI" id="CHEBI:57540"/>
    </ligand>
</feature>
<feature type="binding site" evidence="1">
    <location>
        <position position="352"/>
    </location>
    <ligand>
        <name>NAD(+)</name>
        <dbReference type="ChEBI" id="CHEBI:57540"/>
    </ligand>
</feature>
<keyword id="KW-0963">Cytoplasm</keyword>
<keyword id="KW-0378">Hydrolase</keyword>
<keyword id="KW-0520">NAD</keyword>
<keyword id="KW-0554">One-carbon metabolism</keyword>
<keyword id="KW-1185">Reference proteome</keyword>
<protein>
    <recommendedName>
        <fullName evidence="1">Adenosylhomocysteinase</fullName>
        <ecNumber evidence="1">3.13.2.1</ecNumber>
    </recommendedName>
    <alternativeName>
        <fullName evidence="1">S-adenosyl-L-homocysteine hydrolase</fullName>
        <shortName evidence="1">AdoHcyase</shortName>
    </alternativeName>
</protein>
<proteinExistence type="inferred from homology"/>
<evidence type="ECO:0000255" key="1">
    <source>
        <dbReference type="HAMAP-Rule" id="MF_00563"/>
    </source>
</evidence>
<dbReference type="EC" id="3.13.2.1" evidence="1"/>
<dbReference type="EMBL" id="AE010301">
    <property type="protein sequence ID" value="AAN51665.1"/>
    <property type="molecule type" value="Genomic_DNA"/>
</dbReference>
<dbReference type="RefSeq" id="NP_714650.1">
    <property type="nucleotide sequence ID" value="NC_004343.2"/>
</dbReference>
<dbReference type="RefSeq" id="WP_000117570.1">
    <property type="nucleotide sequence ID" value="NC_004343.2"/>
</dbReference>
<dbReference type="SMR" id="Q8EXV1"/>
<dbReference type="STRING" id="189518.LB_106"/>
<dbReference type="PaxDb" id="189518-LB_106"/>
<dbReference type="EnsemblBacteria" id="AAN51665">
    <property type="protein sequence ID" value="AAN51665"/>
    <property type="gene ID" value="LB_106"/>
</dbReference>
<dbReference type="GeneID" id="61141279"/>
<dbReference type="KEGG" id="lil:LB_106"/>
<dbReference type="PATRIC" id="fig|189518.3.peg.4433"/>
<dbReference type="HOGENOM" id="CLU_025194_2_1_12"/>
<dbReference type="InParanoid" id="Q8EXV1"/>
<dbReference type="OrthoDB" id="9802717at2"/>
<dbReference type="UniPathway" id="UPA00314">
    <property type="reaction ID" value="UER00076"/>
</dbReference>
<dbReference type="Proteomes" id="UP000001408">
    <property type="component" value="Chromosome II"/>
</dbReference>
<dbReference type="GO" id="GO:0005829">
    <property type="term" value="C:cytosol"/>
    <property type="evidence" value="ECO:0000318"/>
    <property type="project" value="GO_Central"/>
</dbReference>
<dbReference type="GO" id="GO:0004013">
    <property type="term" value="F:adenosylhomocysteinase activity"/>
    <property type="evidence" value="ECO:0000318"/>
    <property type="project" value="GO_Central"/>
</dbReference>
<dbReference type="GO" id="GO:0071269">
    <property type="term" value="P:L-homocysteine biosynthetic process"/>
    <property type="evidence" value="ECO:0007669"/>
    <property type="project" value="UniProtKB-UniRule"/>
</dbReference>
<dbReference type="GO" id="GO:0006730">
    <property type="term" value="P:one-carbon metabolic process"/>
    <property type="evidence" value="ECO:0007669"/>
    <property type="project" value="UniProtKB-KW"/>
</dbReference>
<dbReference type="GO" id="GO:0033353">
    <property type="term" value="P:S-adenosylmethionine cycle"/>
    <property type="evidence" value="ECO:0000318"/>
    <property type="project" value="GO_Central"/>
</dbReference>
<dbReference type="CDD" id="cd00401">
    <property type="entry name" value="SAHH"/>
    <property type="match status" value="1"/>
</dbReference>
<dbReference type="FunFam" id="3.40.50.1480:FF:000010">
    <property type="entry name" value="Adenosylhomocysteinase"/>
    <property type="match status" value="1"/>
</dbReference>
<dbReference type="FunFam" id="3.40.50.720:FF:000004">
    <property type="entry name" value="Adenosylhomocysteinase"/>
    <property type="match status" value="1"/>
</dbReference>
<dbReference type="Gene3D" id="3.40.50.1480">
    <property type="entry name" value="Adenosylhomocysteinase-like"/>
    <property type="match status" value="3"/>
</dbReference>
<dbReference type="Gene3D" id="3.40.50.720">
    <property type="entry name" value="NAD(P)-binding Rossmann-like Domain"/>
    <property type="match status" value="1"/>
</dbReference>
<dbReference type="HAMAP" id="MF_00563">
    <property type="entry name" value="AdoHcyase"/>
    <property type="match status" value="1"/>
</dbReference>
<dbReference type="InterPro" id="IPR042172">
    <property type="entry name" value="Adenosylhomocyst_ase-like_sf"/>
</dbReference>
<dbReference type="InterPro" id="IPR000043">
    <property type="entry name" value="Adenosylhomocysteinase-like"/>
</dbReference>
<dbReference type="InterPro" id="IPR015878">
    <property type="entry name" value="Ado_hCys_hydrolase_NAD-bd"/>
</dbReference>
<dbReference type="InterPro" id="IPR036291">
    <property type="entry name" value="NAD(P)-bd_dom_sf"/>
</dbReference>
<dbReference type="InterPro" id="IPR020082">
    <property type="entry name" value="S-Ado-L-homoCys_hydrolase_CS"/>
</dbReference>
<dbReference type="NCBIfam" id="TIGR00936">
    <property type="entry name" value="ahcY"/>
    <property type="match status" value="1"/>
</dbReference>
<dbReference type="NCBIfam" id="NF004005">
    <property type="entry name" value="PRK05476.2-3"/>
    <property type="match status" value="1"/>
</dbReference>
<dbReference type="PANTHER" id="PTHR23420">
    <property type="entry name" value="ADENOSYLHOMOCYSTEINASE"/>
    <property type="match status" value="1"/>
</dbReference>
<dbReference type="PANTHER" id="PTHR23420:SF0">
    <property type="entry name" value="ADENOSYLHOMOCYSTEINASE"/>
    <property type="match status" value="1"/>
</dbReference>
<dbReference type="Pfam" id="PF05221">
    <property type="entry name" value="AdoHcyase"/>
    <property type="match status" value="1"/>
</dbReference>
<dbReference type="Pfam" id="PF00670">
    <property type="entry name" value="AdoHcyase_NAD"/>
    <property type="match status" value="1"/>
</dbReference>
<dbReference type="PIRSF" id="PIRSF001109">
    <property type="entry name" value="Ad_hcy_hydrolase"/>
    <property type="match status" value="1"/>
</dbReference>
<dbReference type="SMART" id="SM00996">
    <property type="entry name" value="AdoHcyase"/>
    <property type="match status" value="1"/>
</dbReference>
<dbReference type="SMART" id="SM00997">
    <property type="entry name" value="AdoHcyase_NAD"/>
    <property type="match status" value="1"/>
</dbReference>
<dbReference type="SUPFAM" id="SSF52283">
    <property type="entry name" value="Formate/glycerate dehydrogenase catalytic domain-like"/>
    <property type="match status" value="1"/>
</dbReference>
<dbReference type="SUPFAM" id="SSF51735">
    <property type="entry name" value="NAD(P)-binding Rossmann-fold domains"/>
    <property type="match status" value="1"/>
</dbReference>
<dbReference type="PROSITE" id="PS00738">
    <property type="entry name" value="ADOHCYASE_1"/>
    <property type="match status" value="1"/>
</dbReference>
<dbReference type="PROSITE" id="PS00739">
    <property type="entry name" value="ADOHCYASE_2"/>
    <property type="match status" value="1"/>
</dbReference>
<sequence length="436" mass="48233">MSVTTQEKDLSYKVKDLSQAEWGRQEIILAEKEMPGLMALRQEYKGKKPLAGARIAGSLHMTIQTAVLIETLTELGAEVRWSSCNIFSTQDHAAAAIAKAGIPVFAWKGETEEEYWWCIEQTIFFGDKGPNMILDDGGDLTAYIHEKYPKLLSEIRGISEETTTGVKSLYKLLKKGELKVPAFNVNDSVTKSKFDNLYGCRESLADGIKRATDVMLAGKVALVCGFGDVGKGSAASLRNFGARVIVTEIDPICALQASMEGYQVLRVEDIIEQVDIVVTATGNDDIITLEHMKAMKDGAILCNIGHFDTEIQMSRLNNEKGVTKKEIKPQVDKYTFPDGKSIIVLAEGRLVNLGCATGHPSFVMSCSFTNQVLAQIELYNNKYELGVYTLPKHLDEKVAALHLEQLGVRLTKLNQKQADYLGVPINGPFKPDHYRY</sequence>
<accession>Q8EXV1</accession>
<name>SAHH_LEPIN</name>
<gene>
    <name evidence="1" type="primary">ahcY</name>
    <name type="ordered locus">LB_106</name>
</gene>